<protein>
    <recommendedName>
        <fullName>Sex-regulated protein janus-B</fullName>
    </recommendedName>
</protein>
<evidence type="ECO:0000250" key="1"/>
<evidence type="ECO:0000305" key="2"/>
<evidence type="ECO:0000312" key="3">
    <source>
        <dbReference type="EMBL" id="AAG50371.1"/>
    </source>
</evidence>
<name>JANB_DROER</name>
<comment type="function">
    <text evidence="1">JanA and janB regulate somatic sex differentiation.</text>
</comment>
<comment type="similarity">
    <text evidence="2">Belongs to the janus family.</text>
</comment>
<sequence>MKMFQSLSLLPRIVSPFRKCYSTDLISLVGVPRVKITKGQNRYLLVNIHTHGFTKYGRVIVRGADVENHLTIFDSILEELEPQGICAKILGGGRILNETDSKKMKIYGTSRTFGSADHTRTRNILQSWTTYKDFKITVKN</sequence>
<accession>Q9BM90</accession>
<accession>B3P7Z9</accession>
<dbReference type="EMBL" id="AY013350">
    <property type="protein sequence ID" value="AAG50371.1"/>
    <property type="molecule type" value="Genomic_DNA"/>
</dbReference>
<dbReference type="EMBL" id="CH954182">
    <property type="protein sequence ID" value="EDV53126.1"/>
    <property type="molecule type" value="Genomic_DNA"/>
</dbReference>
<dbReference type="SMR" id="Q9BM90"/>
<dbReference type="EnsemblMetazoa" id="FBtr0132025">
    <property type="protein sequence ID" value="FBpp0130517"/>
    <property type="gene ID" value="FBgn0043708"/>
</dbReference>
<dbReference type="EnsemblMetazoa" id="XM_001981220.3">
    <property type="protein sequence ID" value="XP_001981256.1"/>
    <property type="gene ID" value="LOC6554366"/>
</dbReference>
<dbReference type="GeneID" id="6554366"/>
<dbReference type="KEGG" id="der:6554366"/>
<dbReference type="HOGENOM" id="CLU_120717_1_0_1"/>
<dbReference type="OMA" id="WTTYKDF"/>
<dbReference type="OrthoDB" id="10249612at2759"/>
<dbReference type="PhylomeDB" id="Q9BM90"/>
<dbReference type="Proteomes" id="UP000008711">
    <property type="component" value="Unassembled WGS sequence"/>
</dbReference>
<dbReference type="GO" id="GO:0005829">
    <property type="term" value="C:cytosol"/>
    <property type="evidence" value="ECO:0007669"/>
    <property type="project" value="TreeGrafter"/>
</dbReference>
<dbReference type="GO" id="GO:0101006">
    <property type="term" value="F:protein histidine phosphatase activity"/>
    <property type="evidence" value="ECO:0007669"/>
    <property type="project" value="TreeGrafter"/>
</dbReference>
<dbReference type="GO" id="GO:0030154">
    <property type="term" value="P:cell differentiation"/>
    <property type="evidence" value="ECO:0007669"/>
    <property type="project" value="UniProtKB-KW"/>
</dbReference>
<dbReference type="GO" id="GO:0007548">
    <property type="term" value="P:sex differentiation"/>
    <property type="evidence" value="ECO:0000250"/>
    <property type="project" value="UniProtKB"/>
</dbReference>
<dbReference type="FunFam" id="3.50.20.20:FF:000002">
    <property type="entry name" value="Sex-regulated protein janus-B"/>
    <property type="match status" value="1"/>
</dbReference>
<dbReference type="Gene3D" id="3.50.20.20">
    <property type="entry name" value="Janus/Ocnus"/>
    <property type="match status" value="1"/>
</dbReference>
<dbReference type="InterPro" id="IPR007702">
    <property type="entry name" value="Janus"/>
</dbReference>
<dbReference type="InterPro" id="IPR038596">
    <property type="entry name" value="Janus_sf"/>
</dbReference>
<dbReference type="PANTHER" id="PTHR12258:SF5">
    <property type="entry name" value="BCDNA.GH02250-RELATED"/>
    <property type="match status" value="1"/>
</dbReference>
<dbReference type="PANTHER" id="PTHR12258">
    <property type="entry name" value="JANUS-A/JANUS-B"/>
    <property type="match status" value="1"/>
</dbReference>
<dbReference type="Pfam" id="PF05005">
    <property type="entry name" value="Ocnus"/>
    <property type="match status" value="1"/>
</dbReference>
<dbReference type="SUPFAM" id="SSF143724">
    <property type="entry name" value="PHP14-like"/>
    <property type="match status" value="1"/>
</dbReference>
<gene>
    <name type="primary">janB</name>
    <name type="ORF">GG11971</name>
</gene>
<proteinExistence type="inferred from homology"/>
<keyword id="KW-0221">Differentiation</keyword>
<keyword id="KW-0726">Sexual differentiation</keyword>
<feature type="chain" id="PRO_0000206164" description="Sex-regulated protein janus-B">
    <location>
        <begin position="1"/>
        <end position="140"/>
    </location>
</feature>
<feature type="active site" description="Proton acceptor" evidence="1">
    <location>
        <position position="69"/>
    </location>
</feature>
<feature type="binding site" evidence="1">
    <location>
        <position position="42"/>
    </location>
    <ligand>
        <name>substrate</name>
    </ligand>
</feature>
<feature type="binding site" evidence="1">
    <location>
        <begin position="110"/>
        <end position="112"/>
    </location>
    <ligand>
        <name>substrate</name>
    </ligand>
</feature>
<reference evidence="3" key="1">
    <citation type="journal article" date="2001" name="Mol. Biol. Evol.">
        <title>Molecular evolution of the ocnus and janus genes in the Drosophila melanogaster species subgroup.</title>
        <authorList>
            <person name="Parsch J."/>
            <person name="Meiklejohn C.D."/>
            <person name="Hauschteck-Jungen E."/>
            <person name="Hunziker P."/>
            <person name="Hartl D.L."/>
        </authorList>
    </citation>
    <scope>NUCLEOTIDE SEQUENCE [GENOMIC DNA]</scope>
</reference>
<reference key="2">
    <citation type="journal article" date="2007" name="Nature">
        <title>Evolution of genes and genomes on the Drosophila phylogeny.</title>
        <authorList>
            <consortium name="Drosophila 12 genomes consortium"/>
        </authorList>
    </citation>
    <scope>NUCLEOTIDE SEQUENCE [LARGE SCALE GENOMIC DNA]</scope>
    <source>
        <strain>Tucson 14021-0224.01</strain>
    </source>
</reference>
<organism evidence="3">
    <name type="scientific">Drosophila erecta</name>
    <name type="common">Fruit fly</name>
    <dbReference type="NCBI Taxonomy" id="7220"/>
    <lineage>
        <taxon>Eukaryota</taxon>
        <taxon>Metazoa</taxon>
        <taxon>Ecdysozoa</taxon>
        <taxon>Arthropoda</taxon>
        <taxon>Hexapoda</taxon>
        <taxon>Insecta</taxon>
        <taxon>Pterygota</taxon>
        <taxon>Neoptera</taxon>
        <taxon>Endopterygota</taxon>
        <taxon>Diptera</taxon>
        <taxon>Brachycera</taxon>
        <taxon>Muscomorpha</taxon>
        <taxon>Ephydroidea</taxon>
        <taxon>Drosophilidae</taxon>
        <taxon>Drosophila</taxon>
        <taxon>Sophophora</taxon>
    </lineage>
</organism>